<name>RL34_HAEI8</name>
<protein>
    <recommendedName>
        <fullName evidence="1">Large ribosomal subunit protein bL34</fullName>
    </recommendedName>
    <alternativeName>
        <fullName evidence="2">50S ribosomal protein L34</fullName>
    </alternativeName>
</protein>
<dbReference type="EMBL" id="CP000057">
    <property type="protein sequence ID" value="AAX88034.1"/>
    <property type="molecule type" value="Genomic_DNA"/>
</dbReference>
<dbReference type="RefSeq" id="WP_005539760.1">
    <property type="nucleotide sequence ID" value="NC_007146.2"/>
</dbReference>
<dbReference type="SMR" id="Q4QLR3"/>
<dbReference type="GeneID" id="93297198"/>
<dbReference type="KEGG" id="hit:NTHI1172"/>
<dbReference type="HOGENOM" id="CLU_129938_2_0_6"/>
<dbReference type="Proteomes" id="UP000002525">
    <property type="component" value="Chromosome"/>
</dbReference>
<dbReference type="GO" id="GO:1990904">
    <property type="term" value="C:ribonucleoprotein complex"/>
    <property type="evidence" value="ECO:0007669"/>
    <property type="project" value="UniProtKB-KW"/>
</dbReference>
<dbReference type="GO" id="GO:0005840">
    <property type="term" value="C:ribosome"/>
    <property type="evidence" value="ECO:0007669"/>
    <property type="project" value="UniProtKB-KW"/>
</dbReference>
<dbReference type="GO" id="GO:0003735">
    <property type="term" value="F:structural constituent of ribosome"/>
    <property type="evidence" value="ECO:0007669"/>
    <property type="project" value="InterPro"/>
</dbReference>
<dbReference type="GO" id="GO:0006412">
    <property type="term" value="P:translation"/>
    <property type="evidence" value="ECO:0007669"/>
    <property type="project" value="UniProtKB-UniRule"/>
</dbReference>
<dbReference type="FunFam" id="1.10.287.3980:FF:000001">
    <property type="entry name" value="Mitochondrial ribosomal protein L34"/>
    <property type="match status" value="1"/>
</dbReference>
<dbReference type="Gene3D" id="1.10.287.3980">
    <property type="match status" value="1"/>
</dbReference>
<dbReference type="HAMAP" id="MF_00391">
    <property type="entry name" value="Ribosomal_bL34"/>
    <property type="match status" value="1"/>
</dbReference>
<dbReference type="InterPro" id="IPR000271">
    <property type="entry name" value="Ribosomal_bL34"/>
</dbReference>
<dbReference type="InterPro" id="IPR020939">
    <property type="entry name" value="Ribosomal_bL34_CS"/>
</dbReference>
<dbReference type="NCBIfam" id="TIGR01030">
    <property type="entry name" value="rpmH_bact"/>
    <property type="match status" value="1"/>
</dbReference>
<dbReference type="PANTHER" id="PTHR14503:SF4">
    <property type="entry name" value="LARGE RIBOSOMAL SUBUNIT PROTEIN BL34M"/>
    <property type="match status" value="1"/>
</dbReference>
<dbReference type="PANTHER" id="PTHR14503">
    <property type="entry name" value="MITOCHONDRIAL RIBOSOMAL PROTEIN 34 FAMILY MEMBER"/>
    <property type="match status" value="1"/>
</dbReference>
<dbReference type="Pfam" id="PF00468">
    <property type="entry name" value="Ribosomal_L34"/>
    <property type="match status" value="1"/>
</dbReference>
<dbReference type="PROSITE" id="PS00784">
    <property type="entry name" value="RIBOSOMAL_L34"/>
    <property type="match status" value="1"/>
</dbReference>
<organism>
    <name type="scientific">Haemophilus influenzae (strain 86-028NP)</name>
    <dbReference type="NCBI Taxonomy" id="281310"/>
    <lineage>
        <taxon>Bacteria</taxon>
        <taxon>Pseudomonadati</taxon>
        <taxon>Pseudomonadota</taxon>
        <taxon>Gammaproteobacteria</taxon>
        <taxon>Pasteurellales</taxon>
        <taxon>Pasteurellaceae</taxon>
        <taxon>Haemophilus</taxon>
    </lineage>
</organism>
<feature type="chain" id="PRO_1000013348" description="Large ribosomal subunit protein bL34">
    <location>
        <begin position="1"/>
        <end position="44"/>
    </location>
</feature>
<gene>
    <name evidence="1" type="primary">rpmH</name>
    <name type="ordered locus">NTHI1172</name>
</gene>
<evidence type="ECO:0000255" key="1">
    <source>
        <dbReference type="HAMAP-Rule" id="MF_00391"/>
    </source>
</evidence>
<evidence type="ECO:0000305" key="2"/>
<accession>Q4QLR3</accession>
<proteinExistence type="inferred from homology"/>
<comment type="similarity">
    <text evidence="1">Belongs to the bacterial ribosomal protein bL34 family.</text>
</comment>
<keyword id="KW-0687">Ribonucleoprotein</keyword>
<keyword id="KW-0689">Ribosomal protein</keyword>
<sequence>MKRTFQPSVLKRSRTHGFRARMATKNGRQVLARRRAKGRKSLSA</sequence>
<reference key="1">
    <citation type="journal article" date="2005" name="J. Bacteriol.">
        <title>Genomic sequence of an otitis media isolate of nontypeable Haemophilus influenzae: comparative study with H. influenzae serotype d, strain KW20.</title>
        <authorList>
            <person name="Harrison A."/>
            <person name="Dyer D.W."/>
            <person name="Gillaspy A."/>
            <person name="Ray W.C."/>
            <person name="Mungur R."/>
            <person name="Carson M.B."/>
            <person name="Zhong H."/>
            <person name="Gipson J."/>
            <person name="Gipson M."/>
            <person name="Johnson L.S."/>
            <person name="Lewis L."/>
            <person name="Bakaletz L.O."/>
            <person name="Munson R.S. Jr."/>
        </authorList>
    </citation>
    <scope>NUCLEOTIDE SEQUENCE [LARGE SCALE GENOMIC DNA]</scope>
    <source>
        <strain>86-028NP</strain>
    </source>
</reference>